<comment type="function">
    <text evidence="1 6 7">Plays multiple roles in neural tissues, regulates neuronal proliferation, survival, differentiation, polarization, as well as axon guidance and synaptic functions. Plays an important role in axon development during neuronal differentiation through the MAPK intracellular signaling pathway (By similarity) (PubMed:26586761, PubMed:32198364). Via binding to its receptor ROBO3, plays a role in axon guidance, functioning as a repulsive axon guidance cue that contributes to commissural axon guidance to the midline (PubMed:26586761, PubMed:32198364). Required for neuron survival through the modulation of MAPK signaling pathways too. Involved in the regulation of hypothalamic GNRH secretion and the control of puberty (By similarity).</text>
</comment>
<comment type="function">
    <text evidence="8 9">Epididymal-secreted protein that signals through a ROS1-pathway to regulate the epididymal initial segment (IS) maturation, sperm maturation and male fertility.</text>
</comment>
<comment type="subunit">
    <text evidence="6 7 9">Homotrimer (PubMed:32198364). Interacts with NICOL1; this interaction triggers epididymal differentiation (PubMed:37095084). Interacts (via EGF domains) with ROBO3 (via FN domains); binding to ROBO3 induces repulsive guidance cue for commissural axons (PubMed:26586761, PubMed:32198364).</text>
</comment>
<comment type="subcellular location">
    <subcellularLocation>
        <location evidence="8">Secreted</location>
    </subcellularLocation>
    <text evidence="8">Detected in the epididymal lumen.</text>
</comment>
<comment type="tissue specificity">
    <text evidence="6 8">Expressed in brain and testis but not in epididymis (PubMed:32499443). Expressed in regions flanking the commissural axon trajectory, including the ventral horn (PubMed:26586761).</text>
</comment>
<comment type="developmental stage">
    <text evidence="6">At 9.5 dpc expressed in the presumptive motor column in the ventral horn. At 10.5 dpc, additional sites of expression include dorsal root ganglia, the dorsal mantle layer of the spinal cord, and a triangular population of cells close to the ventricle. Expression in cells forming ventral corridor persists at 11.5 dpc.</text>
</comment>
<comment type="disruption phenotype">
    <text evidence="8">Deficient male mice exhibit infertility, impaired binding of sperm to zona pellucida, and impaired sperm migration in female genital tract. Postnatal differentiation of the initial segment (IS) of the caput epididymis is completely abolished in Nell2 deficient males and continued throughout life. Ovch2 is not secreted and Adam3 is not processed into its mature form in cauda epididymal spermatozoa, leading to inability of spermatozoa to pass through the uterotubal junction and to bind to the zona pellucida.</text>
</comment>
<comment type="caution">
    <text evidence="10">It is uncertain whether Met-1 or Met-4 is the initiator.</text>
</comment>
<dbReference type="EMBL" id="U59230">
    <property type="protein sequence ID" value="AAB02924.1"/>
    <property type="molecule type" value="mRNA"/>
</dbReference>
<dbReference type="EMBL" id="AC109198">
    <property type="status" value="NOT_ANNOTATED_CDS"/>
    <property type="molecule type" value="Genomic_DNA"/>
</dbReference>
<dbReference type="EMBL" id="AC163991">
    <property type="status" value="NOT_ANNOTATED_CDS"/>
    <property type="molecule type" value="Genomic_DNA"/>
</dbReference>
<dbReference type="EMBL" id="AC164402">
    <property type="status" value="NOT_ANNOTATED_CDS"/>
    <property type="molecule type" value="Genomic_DNA"/>
</dbReference>
<dbReference type="EMBL" id="BC051968">
    <property type="protein sequence ID" value="AAH51968.1"/>
    <property type="molecule type" value="mRNA"/>
</dbReference>
<dbReference type="CCDS" id="CCDS27775.1"/>
<dbReference type="RefSeq" id="NP_001276582.1">
    <property type="nucleotide sequence ID" value="NM_001289653.1"/>
</dbReference>
<dbReference type="RefSeq" id="NP_001343879.1">
    <property type="nucleotide sequence ID" value="NM_001356950.1"/>
</dbReference>
<dbReference type="RefSeq" id="NP_001343880.1">
    <property type="nucleotide sequence ID" value="NM_001356951.1"/>
</dbReference>
<dbReference type="RefSeq" id="XP_006521226.1">
    <property type="nucleotide sequence ID" value="XM_006521163.3"/>
</dbReference>
<dbReference type="RefSeq" id="XP_011243995.1">
    <property type="nucleotide sequence ID" value="XM_011245693.1"/>
</dbReference>
<dbReference type="SMR" id="Q61220"/>
<dbReference type="BioGRID" id="207556">
    <property type="interactions" value="3"/>
</dbReference>
<dbReference type="FunCoup" id="Q61220">
    <property type="interactions" value="390"/>
</dbReference>
<dbReference type="IntAct" id="Q61220">
    <property type="interactions" value="1"/>
</dbReference>
<dbReference type="STRING" id="10090.ENSMUSP00000131665"/>
<dbReference type="GlyConnect" id="2634">
    <property type="glycosylation" value="7 N-Linked glycans (2 sites)"/>
</dbReference>
<dbReference type="GlyCosmos" id="Q61220">
    <property type="glycosylation" value="7 sites, 6 glycans"/>
</dbReference>
<dbReference type="GlyGen" id="Q61220">
    <property type="glycosylation" value="8 sites, 11 N-linked glycans (6 sites)"/>
</dbReference>
<dbReference type="iPTMnet" id="Q61220"/>
<dbReference type="PhosphoSitePlus" id="Q61220"/>
<dbReference type="SwissPalm" id="Q61220"/>
<dbReference type="PaxDb" id="10090-ENSMUSP00000131665"/>
<dbReference type="PeptideAtlas" id="Q61220"/>
<dbReference type="ProteomicsDB" id="252881"/>
<dbReference type="Antibodypedia" id="25202">
    <property type="antibodies" value="203 antibodies from 28 providers"/>
</dbReference>
<dbReference type="Ensembl" id="ENSMUST00000075275.3">
    <property type="protein sequence ID" value="ENSMUSP00000074751.3"/>
    <property type="gene ID" value="ENSMUSG00000022454.18"/>
</dbReference>
<dbReference type="Ensembl" id="ENSMUST00000166170.9">
    <property type="protein sequence ID" value="ENSMUSP00000131665.2"/>
    <property type="gene ID" value="ENSMUSG00000022454.18"/>
</dbReference>
<dbReference type="GeneID" id="54003"/>
<dbReference type="KEGG" id="mmu:54003"/>
<dbReference type="UCSC" id="uc007xjq.2">
    <property type="organism name" value="mouse"/>
</dbReference>
<dbReference type="AGR" id="MGI:1858510"/>
<dbReference type="CTD" id="4753"/>
<dbReference type="MGI" id="MGI:1858510">
    <property type="gene designation" value="Nell2"/>
</dbReference>
<dbReference type="VEuPathDB" id="HostDB:ENSMUSG00000022454"/>
<dbReference type="eggNOG" id="KOG1217">
    <property type="taxonomic scope" value="Eukaryota"/>
</dbReference>
<dbReference type="GeneTree" id="ENSGT00810000125439"/>
<dbReference type="HOGENOM" id="CLU_006887_0_0_1"/>
<dbReference type="InParanoid" id="Q61220"/>
<dbReference type="OMA" id="PENECCQ"/>
<dbReference type="OrthoDB" id="6516201at2759"/>
<dbReference type="PhylomeDB" id="Q61220"/>
<dbReference type="TreeFam" id="TF323325"/>
<dbReference type="BioGRID-ORCS" id="54003">
    <property type="hits" value="1 hit in 79 CRISPR screens"/>
</dbReference>
<dbReference type="ChiTaRS" id="Nell2">
    <property type="organism name" value="mouse"/>
</dbReference>
<dbReference type="PRO" id="PR:Q61220"/>
<dbReference type="Proteomes" id="UP000000589">
    <property type="component" value="Chromosome 15"/>
</dbReference>
<dbReference type="RNAct" id="Q61220">
    <property type="molecule type" value="protein"/>
</dbReference>
<dbReference type="Bgee" id="ENSMUSG00000022454">
    <property type="expression patterns" value="Expressed in dentate gyrus of hippocampal formation granule cell and 154 other cell types or tissues"/>
</dbReference>
<dbReference type="ExpressionAtlas" id="Q61220">
    <property type="expression patterns" value="baseline and differential"/>
</dbReference>
<dbReference type="GO" id="GO:0005576">
    <property type="term" value="C:extracellular region"/>
    <property type="evidence" value="ECO:0000314"/>
    <property type="project" value="UniProtKB"/>
</dbReference>
<dbReference type="GO" id="GO:0005509">
    <property type="term" value="F:calcium ion binding"/>
    <property type="evidence" value="ECO:0000250"/>
    <property type="project" value="UniProtKB"/>
</dbReference>
<dbReference type="GO" id="GO:0042802">
    <property type="term" value="F:identical protein binding"/>
    <property type="evidence" value="ECO:0000314"/>
    <property type="project" value="UniProtKB"/>
</dbReference>
<dbReference type="GO" id="GO:0071679">
    <property type="term" value="P:commissural neuron axon guidance"/>
    <property type="evidence" value="ECO:0000315"/>
    <property type="project" value="UniProtKB"/>
</dbReference>
<dbReference type="GO" id="GO:0009566">
    <property type="term" value="P:fertilization"/>
    <property type="evidence" value="ECO:0000315"/>
    <property type="project" value="UniProtKB"/>
</dbReference>
<dbReference type="GO" id="GO:0070050">
    <property type="term" value="P:neuron cellular homeostasis"/>
    <property type="evidence" value="ECO:0000250"/>
    <property type="project" value="UniProtKB"/>
</dbReference>
<dbReference type="CDD" id="cd00054">
    <property type="entry name" value="EGF_CA"/>
    <property type="match status" value="3"/>
</dbReference>
<dbReference type="CDD" id="cd00110">
    <property type="entry name" value="LamG"/>
    <property type="match status" value="1"/>
</dbReference>
<dbReference type="FunFam" id="2.10.25.10:FF:000121">
    <property type="entry name" value="Neural EGFL like 2"/>
    <property type="match status" value="1"/>
</dbReference>
<dbReference type="FunFam" id="2.10.25.10:FF:000120">
    <property type="entry name" value="Protein kinase C-binding protein NELL1"/>
    <property type="match status" value="1"/>
</dbReference>
<dbReference type="FunFam" id="2.10.25.10:FF:000211">
    <property type="entry name" value="Protein kinase C-binding protein NELL1"/>
    <property type="match status" value="1"/>
</dbReference>
<dbReference type="FunFam" id="2.60.120.200:FF:000015">
    <property type="entry name" value="protein kinase C-binding protein NELL1"/>
    <property type="match status" value="1"/>
</dbReference>
<dbReference type="FunFam" id="2.10.25.10:FF:000102">
    <property type="entry name" value="Protein kinase C-binding protein NELL2"/>
    <property type="match status" value="1"/>
</dbReference>
<dbReference type="FunFam" id="2.10.25.10:FF:000111">
    <property type="entry name" value="Protein kinase C-binding protein NELL2"/>
    <property type="match status" value="1"/>
</dbReference>
<dbReference type="FunFam" id="2.10.70.10:FF:000023">
    <property type="entry name" value="protein kinase C-binding protein NELL2"/>
    <property type="match status" value="1"/>
</dbReference>
<dbReference type="Gene3D" id="2.60.120.200">
    <property type="match status" value="1"/>
</dbReference>
<dbReference type="Gene3D" id="6.20.200.20">
    <property type="match status" value="2"/>
</dbReference>
<dbReference type="Gene3D" id="2.10.70.10">
    <property type="entry name" value="Complement Module, domain 1"/>
    <property type="match status" value="1"/>
</dbReference>
<dbReference type="Gene3D" id="2.10.25.10">
    <property type="entry name" value="Laminin"/>
    <property type="match status" value="6"/>
</dbReference>
<dbReference type="InterPro" id="IPR013320">
    <property type="entry name" value="ConA-like_dom_sf"/>
</dbReference>
<dbReference type="InterPro" id="IPR001881">
    <property type="entry name" value="EGF-like_Ca-bd_dom"/>
</dbReference>
<dbReference type="InterPro" id="IPR000742">
    <property type="entry name" value="EGF-like_dom"/>
</dbReference>
<dbReference type="InterPro" id="IPR000152">
    <property type="entry name" value="EGF-type_Asp/Asn_hydroxyl_site"/>
</dbReference>
<dbReference type="InterPro" id="IPR018097">
    <property type="entry name" value="EGF_Ca-bd_CS"/>
</dbReference>
<dbReference type="InterPro" id="IPR024731">
    <property type="entry name" value="EGF_dom"/>
</dbReference>
<dbReference type="InterPro" id="IPR009030">
    <property type="entry name" value="Growth_fac_rcpt_cys_sf"/>
</dbReference>
<dbReference type="InterPro" id="IPR001791">
    <property type="entry name" value="Laminin_G"/>
</dbReference>
<dbReference type="InterPro" id="IPR049883">
    <property type="entry name" value="NOTCH1_EGF-like"/>
</dbReference>
<dbReference type="InterPro" id="IPR051586">
    <property type="entry name" value="PKC-binding_NELL"/>
</dbReference>
<dbReference type="InterPro" id="IPR048287">
    <property type="entry name" value="TSPN-like_N"/>
</dbReference>
<dbReference type="InterPro" id="IPR001007">
    <property type="entry name" value="VWF_dom"/>
</dbReference>
<dbReference type="PANTHER" id="PTHR24042">
    <property type="entry name" value="NEL HOMOLOG"/>
    <property type="match status" value="1"/>
</dbReference>
<dbReference type="PANTHER" id="PTHR24042:SF0">
    <property type="entry name" value="PROTEIN KINASE C-BINDING PROTEIN NELL2"/>
    <property type="match status" value="1"/>
</dbReference>
<dbReference type="Pfam" id="PF12947">
    <property type="entry name" value="EGF_3"/>
    <property type="match status" value="1"/>
</dbReference>
<dbReference type="Pfam" id="PF07645">
    <property type="entry name" value="EGF_CA"/>
    <property type="match status" value="3"/>
</dbReference>
<dbReference type="Pfam" id="PF02210">
    <property type="entry name" value="Laminin_G_2"/>
    <property type="match status" value="1"/>
</dbReference>
<dbReference type="Pfam" id="PF00093">
    <property type="entry name" value="VWC"/>
    <property type="match status" value="2"/>
</dbReference>
<dbReference type="SMART" id="SM00181">
    <property type="entry name" value="EGF"/>
    <property type="match status" value="6"/>
</dbReference>
<dbReference type="SMART" id="SM00179">
    <property type="entry name" value="EGF_CA"/>
    <property type="match status" value="5"/>
</dbReference>
<dbReference type="SMART" id="SM00282">
    <property type="entry name" value="LamG"/>
    <property type="match status" value="1"/>
</dbReference>
<dbReference type="SMART" id="SM00210">
    <property type="entry name" value="TSPN"/>
    <property type="match status" value="1"/>
</dbReference>
<dbReference type="SMART" id="SM00214">
    <property type="entry name" value="VWC"/>
    <property type="match status" value="4"/>
</dbReference>
<dbReference type="SMART" id="SM00215">
    <property type="entry name" value="VWC_out"/>
    <property type="match status" value="2"/>
</dbReference>
<dbReference type="SUPFAM" id="SSF49899">
    <property type="entry name" value="Concanavalin A-like lectins/glucanases"/>
    <property type="match status" value="1"/>
</dbReference>
<dbReference type="SUPFAM" id="SSF57603">
    <property type="entry name" value="FnI-like domain"/>
    <property type="match status" value="2"/>
</dbReference>
<dbReference type="SUPFAM" id="SSF57184">
    <property type="entry name" value="Growth factor receptor domain"/>
    <property type="match status" value="2"/>
</dbReference>
<dbReference type="PROSITE" id="PS00010">
    <property type="entry name" value="ASX_HYDROXYL"/>
    <property type="match status" value="3"/>
</dbReference>
<dbReference type="PROSITE" id="PS00022">
    <property type="entry name" value="EGF_1"/>
    <property type="match status" value="1"/>
</dbReference>
<dbReference type="PROSITE" id="PS01186">
    <property type="entry name" value="EGF_2"/>
    <property type="match status" value="4"/>
</dbReference>
<dbReference type="PROSITE" id="PS50026">
    <property type="entry name" value="EGF_3"/>
    <property type="match status" value="6"/>
</dbReference>
<dbReference type="PROSITE" id="PS01187">
    <property type="entry name" value="EGF_CA"/>
    <property type="match status" value="3"/>
</dbReference>
<dbReference type="PROSITE" id="PS01208">
    <property type="entry name" value="VWFC_1"/>
    <property type="match status" value="2"/>
</dbReference>
<dbReference type="PROSITE" id="PS50184">
    <property type="entry name" value="VWFC_2"/>
    <property type="match status" value="3"/>
</dbReference>
<sequence length="819" mass="91432">MHAMESRVLLRTFCVILGLGAVWGLGVDPSLQIDVLTELELGESTDGVRQVPGLHNGTKAFLFQESPRSIKASTATAERFFQKLRNKHEFTILVTLKQIHLNSGVILSIHHLDHRYLELESSGHRNEIRLHYRSGTHRPHTEVFPYILADAKWHKLSLAFSASHLILHIDCNKIYERVVEMPSTDLPLGTTFWLGQRNNAHGYFKGIMQDVHVLVMPQGFIAQCPDLNRTCPTCNDFHGLVQKIMELQDILSKTSAKLSRAEQRMNRLDQCYCERTCTVKGTTYRESESWTDGCKNCTCLNGTIQCETLVCPAPDCPPKSAPAYVDGKCCKECKSTCQFQGRSYFEGERNTVYSSSGMCVLYECKDQTMKLVENIGCPPLDCPESHQIALSHSCCKVCKGYDFCSEKHTCMENSVCRNLNDRAVCSCRDGFRALREDNAYCEDIDECAEGRHYCRENTMCVNTPGSFMCICKTGYIRIDDYSCTEHDECLTNQHNCDENALCFNTVGGHNCVCKPGYTGNGTTCKAFCKDGCRNGGACIAANVCACPQGFTGPSCETDIDECSEGFVQCDSRANCINLPGWYHCECRDGYHDNGMFAPGGESCEDIDECGTGRHSCTNDTICFNLDGGYDCRCPHGKNCTGDCVHEGKVKHTGQIWVLENDRCSVCSCQTGFVMCRRMVCDCENPTVDLSCCPECDPRLSSQCLHQNGETVYNSGDTWVQDCRQCRCLQGEVDCWPLACPEVECEFSVLPENECCPRCVTDPCQADTIRNDITKTCLDEMNVVRFTGSSWIKHGTECTLCQCKNGHLCCSVDPQCLQEL</sequence>
<feature type="signal peptide" evidence="2">
    <location>
        <begin position="1"/>
        <end position="24"/>
    </location>
</feature>
<feature type="chain" id="PRO_0000007667" description="Protein kinase C-binding protein NELL2">
    <location>
        <begin position="25"/>
        <end position="819"/>
    </location>
</feature>
<feature type="domain" description="Laminin G-like">
    <location>
        <begin position="67"/>
        <end position="231"/>
    </location>
</feature>
<feature type="domain" description="VWFC 1" evidence="5">
    <location>
        <begin position="275"/>
        <end position="334"/>
    </location>
</feature>
<feature type="domain" description="EGF-like 1" evidence="4">
    <location>
        <begin position="400"/>
        <end position="442"/>
    </location>
</feature>
<feature type="domain" description="EGF-like 2; calcium-binding" evidence="4">
    <location>
        <begin position="443"/>
        <end position="484"/>
    </location>
</feature>
<feature type="domain" description="EGF-like 3; calcium-binding" evidence="4">
    <location>
        <begin position="485"/>
        <end position="525"/>
    </location>
</feature>
<feature type="domain" description="EGF-like 4" evidence="4">
    <location>
        <begin position="526"/>
        <end position="556"/>
    </location>
</feature>
<feature type="domain" description="EGF-like 5; calcium-binding" evidence="4">
    <location>
        <begin position="558"/>
        <end position="604"/>
    </location>
</feature>
<feature type="domain" description="EGF-like 6; calcium-binding" evidence="4">
    <location>
        <begin position="605"/>
        <end position="640"/>
    </location>
</feature>
<feature type="domain" description="VWFC 2" evidence="5">
    <location>
        <begin position="701"/>
        <end position="759"/>
    </location>
</feature>
<feature type="binding site" evidence="2">
    <location>
        <position position="443"/>
    </location>
    <ligand>
        <name>Ca(2+)</name>
        <dbReference type="ChEBI" id="CHEBI:29108"/>
    </ligand>
</feature>
<feature type="binding site" evidence="2">
    <location>
        <position position="444"/>
    </location>
    <ligand>
        <name>Ca(2+)</name>
        <dbReference type="ChEBI" id="CHEBI:29108"/>
    </ligand>
</feature>
<feature type="binding site" evidence="2">
    <location>
        <position position="446"/>
    </location>
    <ligand>
        <name>Ca(2+)</name>
        <dbReference type="ChEBI" id="CHEBI:29108"/>
    </ligand>
</feature>
<feature type="binding site" evidence="2">
    <location>
        <position position="462"/>
    </location>
    <ligand>
        <name>Ca(2+)</name>
        <dbReference type="ChEBI" id="CHEBI:29108"/>
    </ligand>
</feature>
<feature type="binding site" evidence="2">
    <location>
        <position position="463"/>
    </location>
    <ligand>
        <name>Ca(2+)</name>
        <dbReference type="ChEBI" id="CHEBI:29108"/>
    </ligand>
</feature>
<feature type="binding site" evidence="2">
    <location>
        <position position="466"/>
    </location>
    <ligand>
        <name>Ca(2+)</name>
        <dbReference type="ChEBI" id="CHEBI:29108"/>
    </ligand>
</feature>
<feature type="binding site" evidence="2">
    <location>
        <position position="558"/>
    </location>
    <ligand>
        <name>Ca(2+)</name>
        <dbReference type="ChEBI" id="CHEBI:29108"/>
    </ligand>
</feature>
<feature type="binding site" evidence="2">
    <location>
        <position position="559"/>
    </location>
    <ligand>
        <name>Ca(2+)</name>
        <dbReference type="ChEBI" id="CHEBI:29108"/>
    </ligand>
</feature>
<feature type="binding site" evidence="2">
    <location>
        <position position="561"/>
    </location>
    <ligand>
        <name>Ca(2+)</name>
        <dbReference type="ChEBI" id="CHEBI:29108"/>
    </ligand>
</feature>
<feature type="binding site" evidence="2">
    <location>
        <position position="577"/>
    </location>
    <ligand>
        <name>Ca(2+)</name>
        <dbReference type="ChEBI" id="CHEBI:29108"/>
    </ligand>
</feature>
<feature type="binding site" evidence="2">
    <location>
        <position position="578"/>
    </location>
    <ligand>
        <name>Ca(2+)</name>
        <dbReference type="ChEBI" id="CHEBI:29108"/>
    </ligand>
</feature>
<feature type="binding site" evidence="2">
    <location>
        <position position="581"/>
    </location>
    <ligand>
        <name>Ca(2+)</name>
        <dbReference type="ChEBI" id="CHEBI:29108"/>
    </ligand>
</feature>
<feature type="binding site" evidence="2">
    <location>
        <position position="605"/>
    </location>
    <ligand>
        <name>Ca(2+)</name>
        <dbReference type="ChEBI" id="CHEBI:29108"/>
    </ligand>
</feature>
<feature type="binding site" evidence="2">
    <location>
        <position position="606"/>
    </location>
    <ligand>
        <name>Ca(2+)</name>
        <dbReference type="ChEBI" id="CHEBI:29108"/>
    </ligand>
</feature>
<feature type="binding site" evidence="2">
    <location>
        <position position="608"/>
    </location>
    <ligand>
        <name>Ca(2+)</name>
        <dbReference type="ChEBI" id="CHEBI:29108"/>
    </ligand>
</feature>
<feature type="binding site" evidence="2">
    <location>
        <position position="624"/>
    </location>
    <ligand>
        <name>Ca(2+)</name>
        <dbReference type="ChEBI" id="CHEBI:29108"/>
    </ligand>
</feature>
<feature type="binding site" evidence="2">
    <location>
        <position position="625"/>
    </location>
    <ligand>
        <name>Ca(2+)</name>
        <dbReference type="ChEBI" id="CHEBI:29108"/>
    </ligand>
</feature>
<feature type="binding site" evidence="2">
    <location>
        <position position="628"/>
    </location>
    <ligand>
        <name>Ca(2+)</name>
        <dbReference type="ChEBI" id="CHEBI:29108"/>
    </ligand>
</feature>
<feature type="glycosylation site" description="N-linked (GlcNAc...) asparagine" evidence="3">
    <location>
        <position position="56"/>
    </location>
</feature>
<feature type="glycosylation site" description="N-linked (GlcNAc...) asparagine" evidence="3">
    <location>
        <position position="228"/>
    </location>
</feature>
<feature type="glycosylation site" description="N-linked (GlcNAc...) asparagine" evidence="3">
    <location>
        <position position="296"/>
    </location>
</feature>
<feature type="glycosylation site" description="N-linked (GlcNAc...) asparagine" evidence="3">
    <location>
        <position position="301"/>
    </location>
</feature>
<feature type="glycosylation site" description="N-linked (GlcNAc...) asparagine" evidence="2">
    <location>
        <position position="520"/>
    </location>
</feature>
<feature type="glycosylation site" description="O-linked (GlcNAc...) threonine" evidence="2">
    <location>
        <position position="551"/>
    </location>
</feature>
<feature type="glycosylation site" description="N-linked (GlcNAc...) asparagine" evidence="3">
    <location>
        <position position="618"/>
    </location>
</feature>
<feature type="glycosylation site" description="N-linked (GlcNAc...) asparagine" evidence="3">
    <location>
        <position position="638"/>
    </location>
</feature>
<feature type="disulfide bond" evidence="2">
    <location>
        <begin position="404"/>
        <end position="416"/>
    </location>
</feature>
<feature type="disulfide bond" evidence="2">
    <location>
        <begin position="410"/>
        <end position="425"/>
    </location>
</feature>
<feature type="disulfide bond" evidence="2">
    <location>
        <begin position="427"/>
        <end position="441"/>
    </location>
</feature>
<feature type="disulfide bond" evidence="2">
    <location>
        <begin position="447"/>
        <end position="460"/>
    </location>
</feature>
<feature type="disulfide bond" evidence="2">
    <location>
        <begin position="454"/>
        <end position="469"/>
    </location>
</feature>
<feature type="disulfide bond" evidence="2">
    <location>
        <begin position="471"/>
        <end position="483"/>
    </location>
</feature>
<feature type="disulfide bond" evidence="2">
    <location>
        <begin position="489"/>
        <end position="502"/>
    </location>
</feature>
<feature type="disulfide bond" evidence="2">
    <location>
        <begin position="496"/>
        <end position="511"/>
    </location>
</feature>
<feature type="disulfide bond" evidence="2">
    <location>
        <begin position="513"/>
        <end position="524"/>
    </location>
</feature>
<feature type="disulfide bond" evidence="2">
    <location>
        <begin position="528"/>
        <end position="538"/>
    </location>
</feature>
<feature type="disulfide bond" evidence="2">
    <location>
        <begin position="532"/>
        <end position="544"/>
    </location>
</feature>
<feature type="disulfide bond" evidence="2">
    <location>
        <begin position="546"/>
        <end position="555"/>
    </location>
</feature>
<feature type="disulfide bond" evidence="2">
    <location>
        <begin position="562"/>
        <end position="575"/>
    </location>
</feature>
<feature type="disulfide bond" evidence="2">
    <location>
        <begin position="569"/>
        <end position="584"/>
    </location>
</feature>
<feature type="disulfide bond" evidence="2">
    <location>
        <begin position="586"/>
        <end position="603"/>
    </location>
</feature>
<feature type="disulfide bond" evidence="2">
    <location>
        <begin position="609"/>
        <end position="622"/>
    </location>
</feature>
<feature type="disulfide bond" evidence="2">
    <location>
        <begin position="616"/>
        <end position="631"/>
    </location>
</feature>
<feature type="disulfide bond" evidence="2">
    <location>
        <begin position="633"/>
        <end position="639"/>
    </location>
</feature>
<feature type="mutagenesis site" description="Strong (120-fold) reduction of affinity towards ROBO3; when associated with A-453. Reduced axon repulsive activity; when associated with A-453." evidence="7">
    <original>R</original>
    <variation>A</variation>
    <location>
        <position position="451"/>
    </location>
</feature>
<feature type="mutagenesis site" description="Strong (120-fold) reduction of affinity towards ROBO3; when associated with A-451. Reduced axon repulsive activity; when associated with A-453." evidence="7">
    <original>Y</original>
    <variation>A</variation>
    <location>
        <position position="453"/>
    </location>
</feature>
<feature type="mutagenesis site" description="Mildly (2.4-fold) reduction of affinity towards ROBO3. Does not affect axon repulsive activity." evidence="7">
    <original>R</original>
    <variation>A</variation>
    <location>
        <position position="455"/>
    </location>
</feature>
<feature type="mutagenesis site" description="Strong (120-fold) reduction of affinity towards ROBO3; when associated with A-481." evidence="7">
    <original>D</original>
    <variation>A</variation>
    <location>
        <position position="480"/>
    </location>
</feature>
<feature type="mutagenesis site" description="Strong (120-fold) reduction of affinity towards ROBO3; when associated with A-480." evidence="7">
    <original>Y</original>
    <variation>A</variation>
    <location>
        <position position="481"/>
    </location>
</feature>
<feature type="mutagenesis site" description="Abolishes binding to ROBO3; when associated with A-503. Abolishes axon repulsive activity; when associated with A-503." evidence="7">
    <original>L</original>
    <variation>A</variation>
    <location>
        <position position="501"/>
    </location>
</feature>
<feature type="mutagenesis site" description="Abolishes binding to ROBO3; when associated with A-503. Abolishes axon repulsive activity; when associated with A-503." evidence="7">
    <original>F</original>
    <variation>A</variation>
    <location>
        <position position="503"/>
    </location>
</feature>
<feature type="mutagenesis site" description="Mildly (2.4-fold) reduced affinity for ROBO3. Does not affect axon repulsive activity." evidence="7">
    <original>V</original>
    <variation>A</variation>
    <location>
        <position position="512"/>
    </location>
</feature>
<feature type="sequence conflict" description="In Ref. 1; AAB02924." evidence="10" ref="1">
    <original>F</original>
    <variation>L</variation>
    <location>
        <position position="81"/>
    </location>
</feature>
<feature type="sequence conflict" description="In Ref. 1; AAB02924." evidence="10" ref="1">
    <original>S</original>
    <variation>F</variation>
    <location>
        <position position="183"/>
    </location>
</feature>
<feature type="sequence conflict" description="In Ref. 1; AAB02924." evidence="10" ref="1">
    <original>P</original>
    <variation>A</variation>
    <location>
        <position position="187"/>
    </location>
</feature>
<feature type="sequence conflict" description="In Ref. 1; AAB02924." evidence="10" ref="1">
    <original>V</original>
    <variation>A</variation>
    <location>
        <position position="352"/>
    </location>
</feature>
<feature type="sequence conflict" description="In Ref. 1; AAB02924." evidence="10" ref="1">
    <original>A</original>
    <variation>V</variation>
    <location>
        <position position="423"/>
    </location>
</feature>
<feature type="sequence conflict" description="In Ref. 1; AAB02924." evidence="10" ref="1">
    <original>I</original>
    <variation>V</variation>
    <location>
        <position position="470"/>
    </location>
</feature>
<feature type="sequence conflict" description="In Ref. 1; AAB02924." evidence="10" ref="1">
    <original>N</original>
    <variation>T</variation>
    <location>
        <position position="492"/>
    </location>
</feature>
<feature type="sequence conflict" description="In Ref. 1; AAB02924." evidence="10" ref="1">
    <original>C</original>
    <variation>W</variation>
    <location>
        <position position="668"/>
    </location>
</feature>
<feature type="sequence conflict" description="In Ref. 1; AAB02924." evidence="10" ref="1">
    <original>V</original>
    <variation>D</variation>
    <location>
        <position position="687"/>
    </location>
</feature>
<keyword id="KW-0106">Calcium</keyword>
<keyword id="KW-1015">Disulfide bond</keyword>
<keyword id="KW-0245">EGF-like domain</keyword>
<keyword id="KW-0325">Glycoprotein</keyword>
<keyword id="KW-0479">Metal-binding</keyword>
<keyword id="KW-1185">Reference proteome</keyword>
<keyword id="KW-0677">Repeat</keyword>
<keyword id="KW-0964">Secreted</keyword>
<keyword id="KW-0732">Signal</keyword>
<evidence type="ECO:0000250" key="1">
    <source>
        <dbReference type="UniProtKB" id="Q62918"/>
    </source>
</evidence>
<evidence type="ECO:0000250" key="2">
    <source>
        <dbReference type="UniProtKB" id="Q99435"/>
    </source>
</evidence>
<evidence type="ECO:0000255" key="3"/>
<evidence type="ECO:0000255" key="4">
    <source>
        <dbReference type="PROSITE-ProRule" id="PRU00076"/>
    </source>
</evidence>
<evidence type="ECO:0000255" key="5">
    <source>
        <dbReference type="PROSITE-ProRule" id="PRU00220"/>
    </source>
</evidence>
<evidence type="ECO:0000269" key="6">
    <source>
    </source>
</evidence>
<evidence type="ECO:0000269" key="7">
    <source>
    </source>
</evidence>
<evidence type="ECO:0000269" key="8">
    <source>
    </source>
</evidence>
<evidence type="ECO:0000269" key="9">
    <source>
    </source>
</evidence>
<evidence type="ECO:0000305" key="10"/>
<evidence type="ECO:0000312" key="11">
    <source>
        <dbReference type="MGI" id="MGI:1858510"/>
    </source>
</evidence>
<accession>Q61220</accession>
<accession>Q80UM5</accession>
<name>NELL2_MOUSE</name>
<proteinExistence type="evidence at protein level"/>
<reference key="1">
    <citation type="submission" date="1996-05" db="EMBL/GenBank/DDBJ databases">
        <authorList>
            <person name="Elkins D.A."/>
            <person name="Rossi J."/>
        </authorList>
    </citation>
    <scope>NUCLEOTIDE SEQUENCE [MRNA]</scope>
</reference>
<reference key="2">
    <citation type="journal article" date="2009" name="PLoS Biol.">
        <title>Lineage-specific biology revealed by a finished genome assembly of the mouse.</title>
        <authorList>
            <person name="Church D.M."/>
            <person name="Goodstadt L."/>
            <person name="Hillier L.W."/>
            <person name="Zody M.C."/>
            <person name="Goldstein S."/>
            <person name="She X."/>
            <person name="Bult C.J."/>
            <person name="Agarwala R."/>
            <person name="Cherry J.L."/>
            <person name="DiCuccio M."/>
            <person name="Hlavina W."/>
            <person name="Kapustin Y."/>
            <person name="Meric P."/>
            <person name="Maglott D."/>
            <person name="Birtle Z."/>
            <person name="Marques A.C."/>
            <person name="Graves T."/>
            <person name="Zhou S."/>
            <person name="Teague B."/>
            <person name="Potamousis K."/>
            <person name="Churas C."/>
            <person name="Place M."/>
            <person name="Herschleb J."/>
            <person name="Runnheim R."/>
            <person name="Forrest D."/>
            <person name="Amos-Landgraf J."/>
            <person name="Schwartz D.C."/>
            <person name="Cheng Z."/>
            <person name="Lindblad-Toh K."/>
            <person name="Eichler E.E."/>
            <person name="Ponting C.P."/>
        </authorList>
    </citation>
    <scope>NUCLEOTIDE SEQUENCE [LARGE SCALE GENOMIC DNA]</scope>
    <source>
        <strain>C57BL/6J</strain>
    </source>
</reference>
<reference key="3">
    <citation type="journal article" date="2004" name="Genome Res.">
        <title>The status, quality, and expansion of the NIH full-length cDNA project: the Mammalian Gene Collection (MGC).</title>
        <authorList>
            <consortium name="The MGC Project Team"/>
        </authorList>
    </citation>
    <scope>NUCLEOTIDE SEQUENCE [LARGE SCALE MRNA]</scope>
    <source>
        <strain>C57BL/6J</strain>
    </source>
</reference>
<reference key="4">
    <citation type="journal article" date="2010" name="Cell">
        <title>A tissue-specific atlas of mouse protein phosphorylation and expression.</title>
        <authorList>
            <person name="Huttlin E.L."/>
            <person name="Jedrychowski M.P."/>
            <person name="Elias J.E."/>
            <person name="Goswami T."/>
            <person name="Rad R."/>
            <person name="Beausoleil S.A."/>
            <person name="Villen J."/>
            <person name="Haas W."/>
            <person name="Sowa M.E."/>
            <person name="Gygi S.P."/>
        </authorList>
    </citation>
    <scope>IDENTIFICATION BY MASS SPECTROMETRY [LARGE SCALE ANALYSIS]</scope>
    <source>
        <tissue>Brain</tissue>
    </source>
</reference>
<reference key="5">
    <citation type="journal article" date="2015" name="Science">
        <title>Operational redundancy in axon guidance through the multifunctional receptor Robo3 and its ligand NELL2.</title>
        <authorList>
            <person name="Jaworski A."/>
            <person name="Tom I."/>
            <person name="Tong R.K."/>
            <person name="Gildea H.K."/>
            <person name="Koch A.W."/>
            <person name="Gonzalez L.C."/>
            <person name="Tessier-Lavigne M."/>
        </authorList>
    </citation>
    <scope>FUNCTION</scope>
    <scope>DEVELOPMENTAL STAGE</scope>
    <scope>INTERACTION WITH ROBO3</scope>
    <scope>TISSUE SPECIFICITY</scope>
</reference>
<reference key="6">
    <citation type="journal article" date="2020" name="Science">
        <title>NELL2-mediated lumicrine signaling through OVCH2 is required for male fertility.</title>
        <authorList>
            <person name="Kiyozumi D."/>
            <person name="Noda T."/>
            <person name="Yamaguchi R."/>
            <person name="Tobita T."/>
            <person name="Matsumura T."/>
            <person name="Shimada K."/>
            <person name="Kodani M."/>
            <person name="Kohda T."/>
            <person name="Fujihara Y."/>
            <person name="Ozawa M."/>
            <person name="Yu Z."/>
            <person name="Miklossy G."/>
            <person name="Bohren K.M."/>
            <person name="Horie M."/>
            <person name="Okabe M."/>
            <person name="Matzuk M.M."/>
            <person name="Ikawa M."/>
        </authorList>
    </citation>
    <scope>DISRUPTION PHENOTYPE</scope>
    <scope>FUNCTION</scope>
    <scope>SUBCELLULAR LOCATION</scope>
    <scope>TISSUE SPECIFICITY</scope>
    <scope>INTERACTION WITH ROS1</scope>
</reference>
<reference key="7">
    <citation type="journal article" date="2020" name="Nat. Commun.">
        <title>NELL2-Robo3 complex structure reveals mechanisms of receptor activation for axon guidance.</title>
        <authorList>
            <person name="Pak J.S."/>
            <person name="DeLoughery Z.J."/>
            <person name="Wang J."/>
            <person name="Acharya N."/>
            <person name="Park Y."/>
            <person name="Jaworski A."/>
            <person name="Ozkan E."/>
        </authorList>
    </citation>
    <scope>FUNCTION</scope>
    <scope>MUTAGENESIS OF ARG-451; TYR-453; ARG-455; ASP-480; TYR-481; LEU-501; PHE-503 AND VAL-512</scope>
    <scope>SUBUNIT</scope>
    <scope>INTERACTION WITH ROBO3</scope>
</reference>
<reference key="8">
    <citation type="journal article" date="2023" name="Nat. Commun.">
        <title>A small secreted protein NICOL regulates lumicrine-mediated sperm maturation and male fertility.</title>
        <authorList>
            <person name="Kiyozumi D."/>
            <person name="Shimada K."/>
            <person name="Chalick M."/>
            <person name="Emori C."/>
            <person name="Kodani M."/>
            <person name="Oura S."/>
            <person name="Noda T."/>
            <person name="Endo T."/>
            <person name="Matzuk M.M."/>
            <person name="Wreschner D.H."/>
            <person name="Ikawa M."/>
        </authorList>
    </citation>
    <scope>FUNCTION</scope>
    <scope>SUBUNIT</scope>
    <scope>INTERACTION WITH NICOL1</scope>
</reference>
<organism>
    <name type="scientific">Mus musculus</name>
    <name type="common">Mouse</name>
    <dbReference type="NCBI Taxonomy" id="10090"/>
    <lineage>
        <taxon>Eukaryota</taxon>
        <taxon>Metazoa</taxon>
        <taxon>Chordata</taxon>
        <taxon>Craniata</taxon>
        <taxon>Vertebrata</taxon>
        <taxon>Euteleostomi</taxon>
        <taxon>Mammalia</taxon>
        <taxon>Eutheria</taxon>
        <taxon>Euarchontoglires</taxon>
        <taxon>Glires</taxon>
        <taxon>Rodentia</taxon>
        <taxon>Myomorpha</taxon>
        <taxon>Muroidea</taxon>
        <taxon>Muridae</taxon>
        <taxon>Murinae</taxon>
        <taxon>Mus</taxon>
        <taxon>Mus</taxon>
    </lineage>
</organism>
<protein>
    <recommendedName>
        <fullName>Protein kinase C-binding protein NELL2</fullName>
    </recommendedName>
    <alternativeName>
        <fullName>MEL91 protein</fullName>
    </alternativeName>
    <alternativeName>
        <fullName>NEL-like protein 2</fullName>
    </alternativeName>
</protein>
<gene>
    <name evidence="11" type="primary">Nell2</name>
    <name type="synonym">Mel91</name>
</gene>